<name>SGSM3_XENLA</name>
<protein>
    <recommendedName>
        <fullName>Small G protein signaling modulator 3 homolog</fullName>
    </recommendedName>
    <alternativeName>
        <fullName>RUN and TBC1 domain-containing protein 3</fullName>
    </alternativeName>
</protein>
<proteinExistence type="evidence at transcript level"/>
<accession>A6H8I2</accession>
<comment type="similarity">
    <text evidence="4">Belongs to the small G protein signaling modulator family.</text>
</comment>
<dbReference type="EMBL" id="BC146620">
    <property type="protein sequence ID" value="AAI46621.1"/>
    <property type="molecule type" value="mRNA"/>
</dbReference>
<dbReference type="RefSeq" id="NP_001093372.1">
    <property type="nucleotide sequence ID" value="NM_001099902.1"/>
</dbReference>
<dbReference type="SMR" id="A6H8I2"/>
<dbReference type="GeneID" id="100101321"/>
<dbReference type="KEGG" id="xla:100101321"/>
<dbReference type="AGR" id="Xenbase:XB-GENE-965525"/>
<dbReference type="CTD" id="100101321"/>
<dbReference type="Xenbase" id="XB-GENE-965525">
    <property type="gene designation" value="sgsm3.S"/>
</dbReference>
<dbReference type="OrthoDB" id="44736at2759"/>
<dbReference type="Proteomes" id="UP000186698">
    <property type="component" value="Chromosome 4S"/>
</dbReference>
<dbReference type="Bgee" id="100101321">
    <property type="expression patterns" value="Expressed in pancreas and 19 other cell types or tissues"/>
</dbReference>
<dbReference type="GO" id="GO:0005096">
    <property type="term" value="F:GTPase activator activity"/>
    <property type="evidence" value="ECO:0000318"/>
    <property type="project" value="GO_Central"/>
</dbReference>
<dbReference type="GO" id="GO:0031267">
    <property type="term" value="F:small GTPase binding"/>
    <property type="evidence" value="ECO:0000318"/>
    <property type="project" value="GO_Central"/>
</dbReference>
<dbReference type="CDD" id="cd17688">
    <property type="entry name" value="RUN_SGSM3"/>
    <property type="match status" value="1"/>
</dbReference>
<dbReference type="CDD" id="cd11813">
    <property type="entry name" value="SH3_SGSM3"/>
    <property type="match status" value="1"/>
</dbReference>
<dbReference type="FunFam" id="1.10.472.80:FF:000012">
    <property type="entry name" value="Small G protein signaling modulator 3"/>
    <property type="match status" value="1"/>
</dbReference>
<dbReference type="FunFam" id="1.10.8.270:FF:000013">
    <property type="entry name" value="Small G protein signaling modulator 3"/>
    <property type="match status" value="1"/>
</dbReference>
<dbReference type="FunFam" id="2.30.30.40:FF:000115">
    <property type="entry name" value="Small G protein signaling modulator 3 homolog"/>
    <property type="match status" value="1"/>
</dbReference>
<dbReference type="Gene3D" id="1.20.58.900">
    <property type="match status" value="1"/>
</dbReference>
<dbReference type="Gene3D" id="1.10.8.270">
    <property type="entry name" value="putative rabgap domain of human tbc1 domain family member 14 like domains"/>
    <property type="match status" value="1"/>
</dbReference>
<dbReference type="Gene3D" id="2.30.30.40">
    <property type="entry name" value="SH3 Domains"/>
    <property type="match status" value="1"/>
</dbReference>
<dbReference type="Gene3D" id="1.10.472.80">
    <property type="entry name" value="Ypt/Rab-GAP domain of gyp1p, domain 3"/>
    <property type="match status" value="1"/>
</dbReference>
<dbReference type="InterPro" id="IPR000195">
    <property type="entry name" value="Rab-GAP-TBC_dom"/>
</dbReference>
<dbReference type="InterPro" id="IPR035969">
    <property type="entry name" value="Rab-GAP_TBC_sf"/>
</dbReference>
<dbReference type="InterPro" id="IPR050302">
    <property type="entry name" value="Rab_GAP_TBC_domain"/>
</dbReference>
<dbReference type="InterPro" id="IPR004012">
    <property type="entry name" value="Run_dom"/>
</dbReference>
<dbReference type="InterPro" id="IPR037213">
    <property type="entry name" value="Run_dom_sf"/>
</dbReference>
<dbReference type="InterPro" id="IPR035833">
    <property type="entry name" value="SGSM3_SH3"/>
</dbReference>
<dbReference type="InterPro" id="IPR036028">
    <property type="entry name" value="SH3-like_dom_sf"/>
</dbReference>
<dbReference type="InterPro" id="IPR001452">
    <property type="entry name" value="SH3_domain"/>
</dbReference>
<dbReference type="PANTHER" id="PTHR47219">
    <property type="entry name" value="RAB GTPASE-ACTIVATING PROTEIN 1-LIKE"/>
    <property type="match status" value="1"/>
</dbReference>
<dbReference type="PANTHER" id="PTHR47219:SF13">
    <property type="entry name" value="RUN AND TBC1 DOMAIN-CONTAINING PROTEIN 3"/>
    <property type="match status" value="1"/>
</dbReference>
<dbReference type="Pfam" id="PF00566">
    <property type="entry name" value="RabGAP-TBC"/>
    <property type="match status" value="1"/>
</dbReference>
<dbReference type="Pfam" id="PF02759">
    <property type="entry name" value="RUN"/>
    <property type="match status" value="1"/>
</dbReference>
<dbReference type="Pfam" id="PF00018">
    <property type="entry name" value="SH3_1"/>
    <property type="match status" value="1"/>
</dbReference>
<dbReference type="SMART" id="SM00593">
    <property type="entry name" value="RUN"/>
    <property type="match status" value="1"/>
</dbReference>
<dbReference type="SMART" id="SM00326">
    <property type="entry name" value="SH3"/>
    <property type="match status" value="1"/>
</dbReference>
<dbReference type="SMART" id="SM00164">
    <property type="entry name" value="TBC"/>
    <property type="match status" value="1"/>
</dbReference>
<dbReference type="SUPFAM" id="SSF140741">
    <property type="entry name" value="RUN domain-like"/>
    <property type="match status" value="1"/>
</dbReference>
<dbReference type="SUPFAM" id="SSF50044">
    <property type="entry name" value="SH3-domain"/>
    <property type="match status" value="1"/>
</dbReference>
<dbReference type="SUPFAM" id="SSF47923">
    <property type="entry name" value="Ypt/Rab-GAP domain of gyp1p"/>
    <property type="match status" value="2"/>
</dbReference>
<dbReference type="PROSITE" id="PS50826">
    <property type="entry name" value="RUN"/>
    <property type="match status" value="1"/>
</dbReference>
<dbReference type="PROSITE" id="PS50002">
    <property type="entry name" value="SH3"/>
    <property type="match status" value="1"/>
</dbReference>
<dbReference type="PROSITE" id="PS50086">
    <property type="entry name" value="TBC_RABGAP"/>
    <property type="match status" value="1"/>
</dbReference>
<gene>
    <name type="primary">sgsm3</name>
    <name type="synonym">rutbc3</name>
</gene>
<keyword id="KW-1185">Reference proteome</keyword>
<keyword id="KW-0728">SH3 domain</keyword>
<reference evidence="5" key="1">
    <citation type="submission" date="2007-06" db="EMBL/GenBank/DDBJ databases">
        <authorList>
            <consortium name="NIH - Xenopus Gene Collection (XGC) project"/>
        </authorList>
    </citation>
    <scope>NUCLEOTIDE SEQUENCE [LARGE SCALE MRNA]</scope>
    <source>
        <tissue evidence="5">Embryo</tissue>
    </source>
</reference>
<feature type="chain" id="PRO_0000307814" description="Small G protein signaling modulator 3 homolog">
    <location>
        <begin position="1"/>
        <end position="753"/>
    </location>
</feature>
<feature type="domain" description="Rab-GAP TBC" evidence="1">
    <location>
        <begin position="115"/>
        <end position="306"/>
    </location>
</feature>
<feature type="domain" description="SH3" evidence="3">
    <location>
        <begin position="482"/>
        <end position="541"/>
    </location>
</feature>
<feature type="domain" description="RUN" evidence="2">
    <location>
        <begin position="557"/>
        <end position="720"/>
    </location>
</feature>
<organism>
    <name type="scientific">Xenopus laevis</name>
    <name type="common">African clawed frog</name>
    <dbReference type="NCBI Taxonomy" id="8355"/>
    <lineage>
        <taxon>Eukaryota</taxon>
        <taxon>Metazoa</taxon>
        <taxon>Chordata</taxon>
        <taxon>Craniata</taxon>
        <taxon>Vertebrata</taxon>
        <taxon>Euteleostomi</taxon>
        <taxon>Amphibia</taxon>
        <taxon>Batrachia</taxon>
        <taxon>Anura</taxon>
        <taxon>Pipoidea</taxon>
        <taxon>Pipidae</taxon>
        <taxon>Xenopodinae</taxon>
        <taxon>Xenopus</taxon>
        <taxon>Xenopus</taxon>
    </lineage>
</organism>
<evidence type="ECO:0000255" key="1">
    <source>
        <dbReference type="PROSITE-ProRule" id="PRU00163"/>
    </source>
</evidence>
<evidence type="ECO:0000255" key="2">
    <source>
        <dbReference type="PROSITE-ProRule" id="PRU00178"/>
    </source>
</evidence>
<evidence type="ECO:0000255" key="3">
    <source>
        <dbReference type="PROSITE-ProRule" id="PRU00192"/>
    </source>
</evidence>
<evidence type="ECO:0000305" key="4"/>
<evidence type="ECO:0000312" key="5">
    <source>
        <dbReference type="EMBL" id="AAI46621.1"/>
    </source>
</evidence>
<sequence>MSGSYTPSPGGPFSALTASMWPQDILAKYTQKEQTVEQPEFRYDEFGFRVDKEDGAEPNSSKLLGIPLTEDPQQRLRWQAHLEFTHNHDVGDLTWDKIDVTLPHSDKLRSLVLAGIPHSMRPQLWMRLSGALQKKQNSEMTYKDIGRNSSNDDTLAAKQIEKDLLRTMPSNACFSNLQSVGVPRLRRVLRGLAWLFPDIGYCQGTGMVAACLLLFLEEEDAFWMMATIVEDLVPVSYFNTTLVGVQTDQRVLRHLIVQYLPRLDKLLQEHDIELSLITLHWFLTAFASVVHIKLLLRIWDFFFYQGSLVLFQTTLGMLKMKEEELIQSENSASIFNTLSDIPSQIEEADVLLREAMLISGTLTEVMIEAQRRKHLAYLIADQGQLLNSTAAVANLSKIMRRQSQRRKSAITTLLFGDDNFEALKSKNIKQTALVADLREAILQVARHFQYTDPKNCSIDLTPDYTMESHQRDHENYVSCSQSRRRRAKALLDFERHDDDELGFRKNDIITIISQKDEHCWVGELNGLRGWFPAKFVDILDERSKEYSVAGDDSVTEGITDLIRGTLSPSIKSIFEHGLKKPSLLGGPCHPWLFIEEAASREVERDFDSVYSRLVLCKTYRLDEDGKVLTPEELLYRGVQSVNVSHDAAHAQMDVKLRSLISIGLNEQVLHLWLEVLCSSLPTVEKWYQPWSFLRSPGWVQIKCELRVLSKFAFSLSPDWELPVKREDKEKKPLKEGVQDMLVKHHLFSWDIDG</sequence>